<feature type="initiator methionine" description="Removed" evidence="2">
    <location>
        <position position="1"/>
    </location>
</feature>
<feature type="chain" id="PRO_0000254578" description="Protein C3orf33 homolog">
    <location>
        <begin position="2"/>
        <end position="294"/>
    </location>
</feature>
<feature type="transmembrane region" description="Helical" evidence="3">
    <location>
        <begin position="36"/>
        <end position="53"/>
    </location>
</feature>
<feature type="region of interest" description="Disordered" evidence="4">
    <location>
        <begin position="244"/>
        <end position="271"/>
    </location>
</feature>
<feature type="modified residue" description="N-acetylalanine" evidence="2">
    <location>
        <position position="2"/>
    </location>
</feature>
<name>CC033_MOUSE</name>
<dbReference type="EMBL" id="AK087526">
    <property type="protein sequence ID" value="BAC39912.1"/>
    <property type="molecule type" value="mRNA"/>
</dbReference>
<dbReference type="EMBL" id="BC125500">
    <property type="protein sequence ID" value="AAI25501.1"/>
    <property type="molecule type" value="mRNA"/>
</dbReference>
<dbReference type="EMBL" id="BC132160">
    <property type="protein sequence ID" value="AAI32161.1"/>
    <property type="molecule type" value="mRNA"/>
</dbReference>
<dbReference type="CCDS" id="CCDS38445.1"/>
<dbReference type="RefSeq" id="NP_808524.1">
    <property type="nucleotide sequence ID" value="NM_177856.6"/>
</dbReference>
<dbReference type="FunCoup" id="Q8BN57">
    <property type="interactions" value="340"/>
</dbReference>
<dbReference type="GlyGen" id="Q8BN57">
    <property type="glycosylation" value="1 site, 1 O-linked glycan (1 site)"/>
</dbReference>
<dbReference type="iPTMnet" id="Q8BN57"/>
<dbReference type="PhosphoSitePlus" id="Q8BN57"/>
<dbReference type="PaxDb" id="10090-ENSMUSP00000058114"/>
<dbReference type="PeptideAtlas" id="Q8BN57"/>
<dbReference type="Pumba" id="Q8BN57"/>
<dbReference type="Antibodypedia" id="46752">
    <property type="antibodies" value="49 antibodies from 11 providers"/>
</dbReference>
<dbReference type="Ensembl" id="ENSMUST00000061706.7">
    <property type="protein sequence ID" value="ENSMUSP00000058114.7"/>
    <property type="gene ID" value="ENSMUSG00000048581.13"/>
</dbReference>
<dbReference type="GeneID" id="329659"/>
<dbReference type="KEGG" id="mmu:329659"/>
<dbReference type="UCSC" id="uc008pkb.1">
    <property type="organism name" value="mouse"/>
</dbReference>
<dbReference type="AGR" id="MGI:3607716"/>
<dbReference type="MGI" id="MGI:3607716">
    <property type="gene designation" value="E130311K13Rik"/>
</dbReference>
<dbReference type="VEuPathDB" id="HostDB:ENSMUSG00000048581"/>
<dbReference type="eggNOG" id="ENOG502QR9T">
    <property type="taxonomic scope" value="Eukaryota"/>
</dbReference>
<dbReference type="GeneTree" id="ENSGT00390000004493"/>
<dbReference type="HOGENOM" id="CLU_069834_0_0_1"/>
<dbReference type="InParanoid" id="Q8BN57"/>
<dbReference type="OMA" id="ETWKENM"/>
<dbReference type="OrthoDB" id="6220511at2759"/>
<dbReference type="PhylomeDB" id="Q8BN57"/>
<dbReference type="TreeFam" id="TF313180"/>
<dbReference type="BioGRID-ORCS" id="329659">
    <property type="hits" value="2 hits in 77 CRISPR screens"/>
</dbReference>
<dbReference type="PRO" id="PR:Q8BN57"/>
<dbReference type="Proteomes" id="UP000000589">
    <property type="component" value="Chromosome 3"/>
</dbReference>
<dbReference type="RNAct" id="Q8BN57">
    <property type="molecule type" value="protein"/>
</dbReference>
<dbReference type="Bgee" id="ENSMUSG00000048581">
    <property type="expression patterns" value="Expressed in interventricular septum and 225 other cell types or tissues"/>
</dbReference>
<dbReference type="GO" id="GO:0005615">
    <property type="term" value="C:extracellular space"/>
    <property type="evidence" value="ECO:0000250"/>
    <property type="project" value="UniProtKB"/>
</dbReference>
<dbReference type="GO" id="GO:0016020">
    <property type="term" value="C:membrane"/>
    <property type="evidence" value="ECO:0007669"/>
    <property type="project" value="UniProtKB-SubCell"/>
</dbReference>
<dbReference type="GO" id="GO:0070373">
    <property type="term" value="P:negative regulation of ERK1 and ERK2 cascade"/>
    <property type="evidence" value="ECO:0000250"/>
    <property type="project" value="UniProtKB"/>
</dbReference>
<dbReference type="GO" id="GO:0051090">
    <property type="term" value="P:regulation of DNA-binding transcription factor activity"/>
    <property type="evidence" value="ECO:0000250"/>
    <property type="project" value="UniProtKB"/>
</dbReference>
<dbReference type="FunFam" id="2.40.50.90:FF:000024">
    <property type="entry name" value="Chromosome 3 C3orf33 homolog"/>
    <property type="match status" value="1"/>
</dbReference>
<dbReference type="Gene3D" id="2.40.50.90">
    <property type="match status" value="1"/>
</dbReference>
<dbReference type="InterPro" id="IPR042421">
    <property type="entry name" value="C3orf33-like"/>
</dbReference>
<dbReference type="InterPro" id="IPR035437">
    <property type="entry name" value="SNase_OB-fold_sf"/>
</dbReference>
<dbReference type="PANTHER" id="PTHR28434">
    <property type="entry name" value="PROTEIN C3ORF33"/>
    <property type="match status" value="1"/>
</dbReference>
<dbReference type="PANTHER" id="PTHR28434:SF1">
    <property type="entry name" value="PROTEIN C3ORF33"/>
    <property type="match status" value="1"/>
</dbReference>
<dbReference type="SUPFAM" id="SSF50199">
    <property type="entry name" value="Staphylococcal nuclease"/>
    <property type="match status" value="1"/>
</dbReference>
<sequence length="294" mass="33668">MARPPASLGSQAPDRDRGEANVVTRVSQWADNHLRLVQNISTGMAIAGIMLLIRSVRLTSKFTTSSDIPVEFIRKKVKLRGRLQRITECGLEIEHIPITLPFISSWKEEPRGVLLVKLAGVELTESGKVWLQAELKPSQLLWFQLLGKEDSALFCYLLVNKGGYFNVNLNEEILRRGLGKTVLVKGLNYDSKTHWKIHRNLLKAELTALKKGEGIWKEESEKESYFRKLKDSWRERWTKDNDLKPAGADLGSTKDSYHDSRRRASGKGKDSVSNYSFFLKLREFVSRLHFWRKG</sequence>
<comment type="function">
    <text evidence="1">May play a role in transcription regulation.</text>
</comment>
<comment type="subcellular location">
    <subcellularLocation>
        <location evidence="5">Membrane</location>
        <topology evidence="5">Single-pass membrane protein</topology>
    </subcellularLocation>
</comment>
<keyword id="KW-0007">Acetylation</keyword>
<keyword id="KW-0472">Membrane</keyword>
<keyword id="KW-1185">Reference proteome</keyword>
<keyword id="KW-0812">Transmembrane</keyword>
<keyword id="KW-1133">Transmembrane helix</keyword>
<organism>
    <name type="scientific">Mus musculus</name>
    <name type="common">Mouse</name>
    <dbReference type="NCBI Taxonomy" id="10090"/>
    <lineage>
        <taxon>Eukaryota</taxon>
        <taxon>Metazoa</taxon>
        <taxon>Chordata</taxon>
        <taxon>Craniata</taxon>
        <taxon>Vertebrata</taxon>
        <taxon>Euteleostomi</taxon>
        <taxon>Mammalia</taxon>
        <taxon>Eutheria</taxon>
        <taxon>Euarchontoglires</taxon>
        <taxon>Glires</taxon>
        <taxon>Rodentia</taxon>
        <taxon>Myomorpha</taxon>
        <taxon>Muroidea</taxon>
        <taxon>Muridae</taxon>
        <taxon>Murinae</taxon>
        <taxon>Mus</taxon>
        <taxon>Mus</taxon>
    </lineage>
</organism>
<evidence type="ECO:0000250" key="1"/>
<evidence type="ECO:0000250" key="2">
    <source>
        <dbReference type="UniProtKB" id="Q6P1S2"/>
    </source>
</evidence>
<evidence type="ECO:0000255" key="3"/>
<evidence type="ECO:0000256" key="4">
    <source>
        <dbReference type="SAM" id="MobiDB-lite"/>
    </source>
</evidence>
<evidence type="ECO:0000305" key="5"/>
<accession>Q8BN57</accession>
<accession>Q059W9</accession>
<proteinExistence type="evidence at transcript level"/>
<protein>
    <recommendedName>
        <fullName>Protein C3orf33 homolog</fullName>
    </recommendedName>
</protein>
<reference key="1">
    <citation type="journal article" date="2005" name="Science">
        <title>The transcriptional landscape of the mammalian genome.</title>
        <authorList>
            <person name="Carninci P."/>
            <person name="Kasukawa T."/>
            <person name="Katayama S."/>
            <person name="Gough J."/>
            <person name="Frith M.C."/>
            <person name="Maeda N."/>
            <person name="Oyama R."/>
            <person name="Ravasi T."/>
            <person name="Lenhard B."/>
            <person name="Wells C."/>
            <person name="Kodzius R."/>
            <person name="Shimokawa K."/>
            <person name="Bajic V.B."/>
            <person name="Brenner S.E."/>
            <person name="Batalov S."/>
            <person name="Forrest A.R."/>
            <person name="Zavolan M."/>
            <person name="Davis M.J."/>
            <person name="Wilming L.G."/>
            <person name="Aidinis V."/>
            <person name="Allen J.E."/>
            <person name="Ambesi-Impiombato A."/>
            <person name="Apweiler R."/>
            <person name="Aturaliya R.N."/>
            <person name="Bailey T.L."/>
            <person name="Bansal M."/>
            <person name="Baxter L."/>
            <person name="Beisel K.W."/>
            <person name="Bersano T."/>
            <person name="Bono H."/>
            <person name="Chalk A.M."/>
            <person name="Chiu K.P."/>
            <person name="Choudhary V."/>
            <person name="Christoffels A."/>
            <person name="Clutterbuck D.R."/>
            <person name="Crowe M.L."/>
            <person name="Dalla E."/>
            <person name="Dalrymple B.P."/>
            <person name="de Bono B."/>
            <person name="Della Gatta G."/>
            <person name="di Bernardo D."/>
            <person name="Down T."/>
            <person name="Engstrom P."/>
            <person name="Fagiolini M."/>
            <person name="Faulkner G."/>
            <person name="Fletcher C.F."/>
            <person name="Fukushima T."/>
            <person name="Furuno M."/>
            <person name="Futaki S."/>
            <person name="Gariboldi M."/>
            <person name="Georgii-Hemming P."/>
            <person name="Gingeras T.R."/>
            <person name="Gojobori T."/>
            <person name="Green R.E."/>
            <person name="Gustincich S."/>
            <person name="Harbers M."/>
            <person name="Hayashi Y."/>
            <person name="Hensch T.K."/>
            <person name="Hirokawa N."/>
            <person name="Hill D."/>
            <person name="Huminiecki L."/>
            <person name="Iacono M."/>
            <person name="Ikeo K."/>
            <person name="Iwama A."/>
            <person name="Ishikawa T."/>
            <person name="Jakt M."/>
            <person name="Kanapin A."/>
            <person name="Katoh M."/>
            <person name="Kawasawa Y."/>
            <person name="Kelso J."/>
            <person name="Kitamura H."/>
            <person name="Kitano H."/>
            <person name="Kollias G."/>
            <person name="Krishnan S.P."/>
            <person name="Kruger A."/>
            <person name="Kummerfeld S.K."/>
            <person name="Kurochkin I.V."/>
            <person name="Lareau L.F."/>
            <person name="Lazarevic D."/>
            <person name="Lipovich L."/>
            <person name="Liu J."/>
            <person name="Liuni S."/>
            <person name="McWilliam S."/>
            <person name="Madan Babu M."/>
            <person name="Madera M."/>
            <person name="Marchionni L."/>
            <person name="Matsuda H."/>
            <person name="Matsuzawa S."/>
            <person name="Miki H."/>
            <person name="Mignone F."/>
            <person name="Miyake S."/>
            <person name="Morris K."/>
            <person name="Mottagui-Tabar S."/>
            <person name="Mulder N."/>
            <person name="Nakano N."/>
            <person name="Nakauchi H."/>
            <person name="Ng P."/>
            <person name="Nilsson R."/>
            <person name="Nishiguchi S."/>
            <person name="Nishikawa S."/>
            <person name="Nori F."/>
            <person name="Ohara O."/>
            <person name="Okazaki Y."/>
            <person name="Orlando V."/>
            <person name="Pang K.C."/>
            <person name="Pavan W.J."/>
            <person name="Pavesi G."/>
            <person name="Pesole G."/>
            <person name="Petrovsky N."/>
            <person name="Piazza S."/>
            <person name="Reed J."/>
            <person name="Reid J.F."/>
            <person name="Ring B.Z."/>
            <person name="Ringwald M."/>
            <person name="Rost B."/>
            <person name="Ruan Y."/>
            <person name="Salzberg S.L."/>
            <person name="Sandelin A."/>
            <person name="Schneider C."/>
            <person name="Schoenbach C."/>
            <person name="Sekiguchi K."/>
            <person name="Semple C.A."/>
            <person name="Seno S."/>
            <person name="Sessa L."/>
            <person name="Sheng Y."/>
            <person name="Shibata Y."/>
            <person name="Shimada H."/>
            <person name="Shimada K."/>
            <person name="Silva D."/>
            <person name="Sinclair B."/>
            <person name="Sperling S."/>
            <person name="Stupka E."/>
            <person name="Sugiura K."/>
            <person name="Sultana R."/>
            <person name="Takenaka Y."/>
            <person name="Taki K."/>
            <person name="Tammoja K."/>
            <person name="Tan S.L."/>
            <person name="Tang S."/>
            <person name="Taylor M.S."/>
            <person name="Tegner J."/>
            <person name="Teichmann S.A."/>
            <person name="Ueda H.R."/>
            <person name="van Nimwegen E."/>
            <person name="Verardo R."/>
            <person name="Wei C.L."/>
            <person name="Yagi K."/>
            <person name="Yamanishi H."/>
            <person name="Zabarovsky E."/>
            <person name="Zhu S."/>
            <person name="Zimmer A."/>
            <person name="Hide W."/>
            <person name="Bult C."/>
            <person name="Grimmond S.M."/>
            <person name="Teasdale R.D."/>
            <person name="Liu E.T."/>
            <person name="Brusic V."/>
            <person name="Quackenbush J."/>
            <person name="Wahlestedt C."/>
            <person name="Mattick J.S."/>
            <person name="Hume D.A."/>
            <person name="Kai C."/>
            <person name="Sasaki D."/>
            <person name="Tomaru Y."/>
            <person name="Fukuda S."/>
            <person name="Kanamori-Katayama M."/>
            <person name="Suzuki M."/>
            <person name="Aoki J."/>
            <person name="Arakawa T."/>
            <person name="Iida J."/>
            <person name="Imamura K."/>
            <person name="Itoh M."/>
            <person name="Kato T."/>
            <person name="Kawaji H."/>
            <person name="Kawagashira N."/>
            <person name="Kawashima T."/>
            <person name="Kojima M."/>
            <person name="Kondo S."/>
            <person name="Konno H."/>
            <person name="Nakano K."/>
            <person name="Ninomiya N."/>
            <person name="Nishio T."/>
            <person name="Okada M."/>
            <person name="Plessy C."/>
            <person name="Shibata K."/>
            <person name="Shiraki T."/>
            <person name="Suzuki S."/>
            <person name="Tagami M."/>
            <person name="Waki K."/>
            <person name="Watahiki A."/>
            <person name="Okamura-Oho Y."/>
            <person name="Suzuki H."/>
            <person name="Kawai J."/>
            <person name="Hayashizaki Y."/>
        </authorList>
    </citation>
    <scope>NUCLEOTIDE SEQUENCE [LARGE SCALE MRNA]</scope>
    <source>
        <strain>C57BL/6J</strain>
        <tissue>Eye</tissue>
    </source>
</reference>
<reference key="2">
    <citation type="journal article" date="2004" name="Genome Res.">
        <title>The status, quality, and expansion of the NIH full-length cDNA project: the Mammalian Gene Collection (MGC).</title>
        <authorList>
            <consortium name="The MGC Project Team"/>
        </authorList>
    </citation>
    <scope>NUCLEOTIDE SEQUENCE [LARGE SCALE MRNA]</scope>
    <source>
        <tissue>Brain</tissue>
    </source>
</reference>